<gene>
    <name evidence="1" type="primary">ureA</name>
    <name type="ordered locus">SaurJH1_2355</name>
</gene>
<comment type="catalytic activity">
    <reaction evidence="1">
        <text>urea + 2 H2O + H(+) = hydrogencarbonate + 2 NH4(+)</text>
        <dbReference type="Rhea" id="RHEA:20557"/>
        <dbReference type="ChEBI" id="CHEBI:15377"/>
        <dbReference type="ChEBI" id="CHEBI:15378"/>
        <dbReference type="ChEBI" id="CHEBI:16199"/>
        <dbReference type="ChEBI" id="CHEBI:17544"/>
        <dbReference type="ChEBI" id="CHEBI:28938"/>
        <dbReference type="EC" id="3.5.1.5"/>
    </reaction>
</comment>
<comment type="pathway">
    <text evidence="1">Nitrogen metabolism; urea degradation; CO(2) and NH(3) from urea (urease route): step 1/1.</text>
</comment>
<comment type="subunit">
    <text evidence="1">Heterotrimer of UreA (gamma), UreB (beta) and UreC (alpha) subunits. Three heterotrimers associate to form the active enzyme.</text>
</comment>
<comment type="subcellular location">
    <subcellularLocation>
        <location evidence="1">Cytoplasm</location>
    </subcellularLocation>
</comment>
<comment type="similarity">
    <text evidence="1">Belongs to the urease gamma subunit family.</text>
</comment>
<evidence type="ECO:0000255" key="1">
    <source>
        <dbReference type="HAMAP-Rule" id="MF_00739"/>
    </source>
</evidence>
<reference key="1">
    <citation type="submission" date="2007-06" db="EMBL/GenBank/DDBJ databases">
        <title>Complete sequence of chromosome of Staphylococcus aureus subsp. aureus JH1.</title>
        <authorList>
            <consortium name="US DOE Joint Genome Institute"/>
            <person name="Copeland A."/>
            <person name="Lucas S."/>
            <person name="Lapidus A."/>
            <person name="Barry K."/>
            <person name="Detter J.C."/>
            <person name="Glavina del Rio T."/>
            <person name="Hammon N."/>
            <person name="Israni S."/>
            <person name="Dalin E."/>
            <person name="Tice H."/>
            <person name="Pitluck S."/>
            <person name="Chain P."/>
            <person name="Malfatti S."/>
            <person name="Shin M."/>
            <person name="Vergez L."/>
            <person name="Schmutz J."/>
            <person name="Larimer F."/>
            <person name="Land M."/>
            <person name="Hauser L."/>
            <person name="Kyrpides N."/>
            <person name="Ivanova N."/>
            <person name="Tomasz A."/>
            <person name="Richardson P."/>
        </authorList>
    </citation>
    <scope>NUCLEOTIDE SEQUENCE [LARGE SCALE GENOMIC DNA]</scope>
    <source>
        <strain>JH1</strain>
    </source>
</reference>
<accession>A6U412</accession>
<feature type="chain" id="PRO_1000083429" description="Urease subunit gamma">
    <location>
        <begin position="1"/>
        <end position="100"/>
    </location>
</feature>
<keyword id="KW-0963">Cytoplasm</keyword>
<keyword id="KW-0378">Hydrolase</keyword>
<proteinExistence type="inferred from homology"/>
<protein>
    <recommendedName>
        <fullName evidence="1">Urease subunit gamma</fullName>
        <ecNumber evidence="1">3.5.1.5</ecNumber>
    </recommendedName>
    <alternativeName>
        <fullName evidence="1">Urea amidohydrolase subunit gamma</fullName>
    </alternativeName>
</protein>
<sequence>MHFTQREQDKLMIVVAAEVARRRKARGLKLNHPEALALISDELLEGARDGKTVAELMSYGRQILNKEDVMDGVEHMITDIEIEATFPDGTKLITVHHPIV</sequence>
<dbReference type="EC" id="3.5.1.5" evidence="1"/>
<dbReference type="EMBL" id="CP000736">
    <property type="protein sequence ID" value="ABR53180.1"/>
    <property type="molecule type" value="Genomic_DNA"/>
</dbReference>
<dbReference type="SMR" id="A6U412"/>
<dbReference type="KEGG" id="sah:SaurJH1_2355"/>
<dbReference type="HOGENOM" id="CLU_145825_1_0_9"/>
<dbReference type="UniPathway" id="UPA00258">
    <property type="reaction ID" value="UER00370"/>
</dbReference>
<dbReference type="GO" id="GO:0005737">
    <property type="term" value="C:cytoplasm"/>
    <property type="evidence" value="ECO:0007669"/>
    <property type="project" value="UniProtKB-SubCell"/>
</dbReference>
<dbReference type="GO" id="GO:0016151">
    <property type="term" value="F:nickel cation binding"/>
    <property type="evidence" value="ECO:0007669"/>
    <property type="project" value="InterPro"/>
</dbReference>
<dbReference type="GO" id="GO:0009039">
    <property type="term" value="F:urease activity"/>
    <property type="evidence" value="ECO:0007669"/>
    <property type="project" value="UniProtKB-UniRule"/>
</dbReference>
<dbReference type="GO" id="GO:0043419">
    <property type="term" value="P:urea catabolic process"/>
    <property type="evidence" value="ECO:0007669"/>
    <property type="project" value="UniProtKB-UniRule"/>
</dbReference>
<dbReference type="CDD" id="cd00390">
    <property type="entry name" value="Urease_gamma"/>
    <property type="match status" value="1"/>
</dbReference>
<dbReference type="Gene3D" id="3.30.280.10">
    <property type="entry name" value="Urease, gamma-like subunit"/>
    <property type="match status" value="1"/>
</dbReference>
<dbReference type="HAMAP" id="MF_00739">
    <property type="entry name" value="Urease_gamma"/>
    <property type="match status" value="1"/>
</dbReference>
<dbReference type="InterPro" id="IPR012010">
    <property type="entry name" value="Urease_gamma"/>
</dbReference>
<dbReference type="InterPro" id="IPR002026">
    <property type="entry name" value="Urease_gamma/gamma-beta_su"/>
</dbReference>
<dbReference type="InterPro" id="IPR036463">
    <property type="entry name" value="Urease_gamma_sf"/>
</dbReference>
<dbReference type="InterPro" id="IPR050069">
    <property type="entry name" value="Urease_subunit"/>
</dbReference>
<dbReference type="NCBIfam" id="NF009712">
    <property type="entry name" value="PRK13241.1"/>
    <property type="match status" value="1"/>
</dbReference>
<dbReference type="NCBIfam" id="TIGR00193">
    <property type="entry name" value="urease_gam"/>
    <property type="match status" value="1"/>
</dbReference>
<dbReference type="PANTHER" id="PTHR33569">
    <property type="entry name" value="UREASE"/>
    <property type="match status" value="1"/>
</dbReference>
<dbReference type="PANTHER" id="PTHR33569:SF1">
    <property type="entry name" value="UREASE"/>
    <property type="match status" value="1"/>
</dbReference>
<dbReference type="Pfam" id="PF00547">
    <property type="entry name" value="Urease_gamma"/>
    <property type="match status" value="1"/>
</dbReference>
<dbReference type="PIRSF" id="PIRSF001223">
    <property type="entry name" value="Urease_gamma"/>
    <property type="match status" value="1"/>
</dbReference>
<dbReference type="SUPFAM" id="SSF54111">
    <property type="entry name" value="Urease, gamma-subunit"/>
    <property type="match status" value="1"/>
</dbReference>
<name>URE3_STAA2</name>
<organism>
    <name type="scientific">Staphylococcus aureus (strain JH1)</name>
    <dbReference type="NCBI Taxonomy" id="359787"/>
    <lineage>
        <taxon>Bacteria</taxon>
        <taxon>Bacillati</taxon>
        <taxon>Bacillota</taxon>
        <taxon>Bacilli</taxon>
        <taxon>Bacillales</taxon>
        <taxon>Staphylococcaceae</taxon>
        <taxon>Staphylococcus</taxon>
    </lineage>
</organism>